<gene>
    <name evidence="5" type="primary">ZGLP1</name>
    <name evidence="1" type="synonym">GLP1</name>
</gene>
<evidence type="ECO:0000250" key="1">
    <source>
        <dbReference type="UniProtKB" id="Q1WG82"/>
    </source>
</evidence>
<evidence type="ECO:0000255" key="2">
    <source>
        <dbReference type="PROSITE-ProRule" id="PRU00094"/>
    </source>
</evidence>
<evidence type="ECO:0000256" key="3">
    <source>
        <dbReference type="SAM" id="MobiDB-lite"/>
    </source>
</evidence>
<evidence type="ECO:0000305" key="4"/>
<evidence type="ECO:0000312" key="5">
    <source>
        <dbReference type="HGNC" id="HGNC:37245"/>
    </source>
</evidence>
<accession>P0C6A0</accession>
<accession>A0A9L9PXT6</accession>
<name>ZGLP1_HUMAN</name>
<reference key="1">
    <citation type="journal article" date="2004" name="Nat. Genet.">
        <title>Complete sequencing and characterization of 21,243 full-length human cDNAs.</title>
        <authorList>
            <person name="Ota T."/>
            <person name="Suzuki Y."/>
            <person name="Nishikawa T."/>
            <person name="Otsuki T."/>
            <person name="Sugiyama T."/>
            <person name="Irie R."/>
            <person name="Wakamatsu A."/>
            <person name="Hayashi K."/>
            <person name="Sato H."/>
            <person name="Nagai K."/>
            <person name="Kimura K."/>
            <person name="Makita H."/>
            <person name="Sekine M."/>
            <person name="Obayashi M."/>
            <person name="Nishi T."/>
            <person name="Shibahara T."/>
            <person name="Tanaka T."/>
            <person name="Ishii S."/>
            <person name="Yamamoto J."/>
            <person name="Saito K."/>
            <person name="Kawai Y."/>
            <person name="Isono Y."/>
            <person name="Nakamura Y."/>
            <person name="Nagahari K."/>
            <person name="Murakami K."/>
            <person name="Yasuda T."/>
            <person name="Iwayanagi T."/>
            <person name="Wagatsuma M."/>
            <person name="Shiratori A."/>
            <person name="Sudo H."/>
            <person name="Hosoiri T."/>
            <person name="Kaku Y."/>
            <person name="Kodaira H."/>
            <person name="Kondo H."/>
            <person name="Sugawara M."/>
            <person name="Takahashi M."/>
            <person name="Kanda K."/>
            <person name="Yokoi T."/>
            <person name="Furuya T."/>
            <person name="Kikkawa E."/>
            <person name="Omura Y."/>
            <person name="Abe K."/>
            <person name="Kamihara K."/>
            <person name="Katsuta N."/>
            <person name="Sato K."/>
            <person name="Tanikawa M."/>
            <person name="Yamazaki M."/>
            <person name="Ninomiya K."/>
            <person name="Ishibashi T."/>
            <person name="Yamashita H."/>
            <person name="Murakawa K."/>
            <person name="Fujimori K."/>
            <person name="Tanai H."/>
            <person name="Kimata M."/>
            <person name="Watanabe M."/>
            <person name="Hiraoka S."/>
            <person name="Chiba Y."/>
            <person name="Ishida S."/>
            <person name="Ono Y."/>
            <person name="Takiguchi S."/>
            <person name="Watanabe S."/>
            <person name="Yosida M."/>
            <person name="Hotuta T."/>
            <person name="Kusano J."/>
            <person name="Kanehori K."/>
            <person name="Takahashi-Fujii A."/>
            <person name="Hara H."/>
            <person name="Tanase T.-O."/>
            <person name="Nomura Y."/>
            <person name="Togiya S."/>
            <person name="Komai F."/>
            <person name="Hara R."/>
            <person name="Takeuchi K."/>
            <person name="Arita M."/>
            <person name="Imose N."/>
            <person name="Musashino K."/>
            <person name="Yuuki H."/>
            <person name="Oshima A."/>
            <person name="Sasaki N."/>
            <person name="Aotsuka S."/>
            <person name="Yoshikawa Y."/>
            <person name="Matsunawa H."/>
            <person name="Ichihara T."/>
            <person name="Shiohata N."/>
            <person name="Sano S."/>
            <person name="Moriya S."/>
            <person name="Momiyama H."/>
            <person name="Satoh N."/>
            <person name="Takami S."/>
            <person name="Terashima Y."/>
            <person name="Suzuki O."/>
            <person name="Nakagawa S."/>
            <person name="Senoh A."/>
            <person name="Mizoguchi H."/>
            <person name="Goto Y."/>
            <person name="Shimizu F."/>
            <person name="Wakebe H."/>
            <person name="Hishigaki H."/>
            <person name="Watanabe T."/>
            <person name="Sugiyama A."/>
            <person name="Takemoto M."/>
            <person name="Kawakami B."/>
            <person name="Yamazaki M."/>
            <person name="Watanabe K."/>
            <person name="Kumagai A."/>
            <person name="Itakura S."/>
            <person name="Fukuzumi Y."/>
            <person name="Fujimori Y."/>
            <person name="Komiyama M."/>
            <person name="Tashiro H."/>
            <person name="Tanigami A."/>
            <person name="Fujiwara T."/>
            <person name="Ono T."/>
            <person name="Yamada K."/>
            <person name="Fujii Y."/>
            <person name="Ozaki K."/>
            <person name="Hirao M."/>
            <person name="Ohmori Y."/>
            <person name="Kawabata A."/>
            <person name="Hikiji T."/>
            <person name="Kobatake N."/>
            <person name="Inagaki H."/>
            <person name="Ikema Y."/>
            <person name="Okamoto S."/>
            <person name="Okitani R."/>
            <person name="Kawakami T."/>
            <person name="Noguchi S."/>
            <person name="Itoh T."/>
            <person name="Shigeta K."/>
            <person name="Senba T."/>
            <person name="Matsumura K."/>
            <person name="Nakajima Y."/>
            <person name="Mizuno T."/>
            <person name="Morinaga M."/>
            <person name="Sasaki M."/>
            <person name="Togashi T."/>
            <person name="Oyama M."/>
            <person name="Hata H."/>
            <person name="Watanabe M."/>
            <person name="Komatsu T."/>
            <person name="Mizushima-Sugano J."/>
            <person name="Satoh T."/>
            <person name="Shirai Y."/>
            <person name="Takahashi Y."/>
            <person name="Nakagawa K."/>
            <person name="Okumura K."/>
            <person name="Nagase T."/>
            <person name="Nomura N."/>
            <person name="Kikuchi H."/>
            <person name="Masuho Y."/>
            <person name="Yamashita R."/>
            <person name="Nakai K."/>
            <person name="Yada T."/>
            <person name="Nakamura Y."/>
            <person name="Ohara O."/>
            <person name="Isogai T."/>
            <person name="Sugano S."/>
        </authorList>
    </citation>
    <scope>NUCLEOTIDE SEQUENCE [LARGE SCALE MRNA] (ISOFORM 1)</scope>
    <source>
        <tissue>Prostate</tissue>
    </source>
</reference>
<reference key="2">
    <citation type="journal article" date="2004" name="Nature">
        <title>The DNA sequence and biology of human chromosome 19.</title>
        <authorList>
            <person name="Grimwood J."/>
            <person name="Gordon L.A."/>
            <person name="Olsen A.S."/>
            <person name="Terry A."/>
            <person name="Schmutz J."/>
            <person name="Lamerdin J.E."/>
            <person name="Hellsten U."/>
            <person name="Goodstein D."/>
            <person name="Couronne O."/>
            <person name="Tran-Gyamfi M."/>
            <person name="Aerts A."/>
            <person name="Altherr M."/>
            <person name="Ashworth L."/>
            <person name="Bajorek E."/>
            <person name="Black S."/>
            <person name="Branscomb E."/>
            <person name="Caenepeel S."/>
            <person name="Carrano A.V."/>
            <person name="Caoile C."/>
            <person name="Chan Y.M."/>
            <person name="Christensen M."/>
            <person name="Cleland C.A."/>
            <person name="Copeland A."/>
            <person name="Dalin E."/>
            <person name="Dehal P."/>
            <person name="Denys M."/>
            <person name="Detter J.C."/>
            <person name="Escobar J."/>
            <person name="Flowers D."/>
            <person name="Fotopulos D."/>
            <person name="Garcia C."/>
            <person name="Georgescu A.M."/>
            <person name="Glavina T."/>
            <person name="Gomez M."/>
            <person name="Gonzales E."/>
            <person name="Groza M."/>
            <person name="Hammon N."/>
            <person name="Hawkins T."/>
            <person name="Haydu L."/>
            <person name="Ho I."/>
            <person name="Huang W."/>
            <person name="Israni S."/>
            <person name="Jett J."/>
            <person name="Kadner K."/>
            <person name="Kimball H."/>
            <person name="Kobayashi A."/>
            <person name="Larionov V."/>
            <person name="Leem S.-H."/>
            <person name="Lopez F."/>
            <person name="Lou Y."/>
            <person name="Lowry S."/>
            <person name="Malfatti S."/>
            <person name="Martinez D."/>
            <person name="McCready P.M."/>
            <person name="Medina C."/>
            <person name="Morgan J."/>
            <person name="Nelson K."/>
            <person name="Nolan M."/>
            <person name="Ovcharenko I."/>
            <person name="Pitluck S."/>
            <person name="Pollard M."/>
            <person name="Popkie A.P."/>
            <person name="Predki P."/>
            <person name="Quan G."/>
            <person name="Ramirez L."/>
            <person name="Rash S."/>
            <person name="Retterer J."/>
            <person name="Rodriguez A."/>
            <person name="Rogers S."/>
            <person name="Salamov A."/>
            <person name="Salazar A."/>
            <person name="She X."/>
            <person name="Smith D."/>
            <person name="Slezak T."/>
            <person name="Solovyev V."/>
            <person name="Thayer N."/>
            <person name="Tice H."/>
            <person name="Tsai M."/>
            <person name="Ustaszewska A."/>
            <person name="Vo N."/>
            <person name="Wagner M."/>
            <person name="Wheeler J."/>
            <person name="Wu K."/>
            <person name="Xie G."/>
            <person name="Yang J."/>
            <person name="Dubchak I."/>
            <person name="Furey T.S."/>
            <person name="DeJong P."/>
            <person name="Dickson M."/>
            <person name="Gordon D."/>
            <person name="Eichler E.E."/>
            <person name="Pennacchio L.A."/>
            <person name="Richardson P."/>
            <person name="Stubbs L."/>
            <person name="Rokhsar D.S."/>
            <person name="Myers R.M."/>
            <person name="Rubin E.M."/>
            <person name="Lucas S.M."/>
        </authorList>
    </citation>
    <scope>NUCLEOTIDE SEQUENCE [LARGE SCALE GENOMIC DNA]</scope>
</reference>
<reference key="3">
    <citation type="journal article" date="2004" name="Genome Res.">
        <title>The status, quality, and expansion of the NIH full-length cDNA project: the Mammalian Gene Collection (MGC).</title>
        <authorList>
            <consortium name="The MGC Project Team"/>
        </authorList>
    </citation>
    <scope>NUCLEOTIDE SEQUENCE [LARGE SCALE MRNA] (ISOFORM 1)</scope>
    <source>
        <tissue>Fetal brain</tissue>
    </source>
</reference>
<keyword id="KW-0010">Activator</keyword>
<keyword id="KW-0025">Alternative splicing</keyword>
<keyword id="KW-0217">Developmental protein</keyword>
<keyword id="KW-0221">Differentiation</keyword>
<keyword id="KW-0238">DNA-binding</keyword>
<keyword id="KW-0479">Metal-binding</keyword>
<keyword id="KW-0539">Nucleus</keyword>
<keyword id="KW-0896">Oogenesis</keyword>
<keyword id="KW-1267">Proteomics identification</keyword>
<keyword id="KW-1185">Reference proteome</keyword>
<keyword id="KW-0678">Repressor</keyword>
<keyword id="KW-0744">Spermatogenesis</keyword>
<keyword id="KW-0804">Transcription</keyword>
<keyword id="KW-0805">Transcription regulation</keyword>
<keyword id="KW-0862">Zinc</keyword>
<keyword id="KW-0863">Zinc-finger</keyword>
<proteinExistence type="evidence at protein level"/>
<feature type="chain" id="PRO_0000317557" description="GATA-type zinc finger protein 1">
    <location>
        <begin position="1"/>
        <end position="273"/>
    </location>
</feature>
<feature type="zinc finger region" description="GATA-type" evidence="2">
    <location>
        <begin position="208"/>
        <end position="232"/>
    </location>
</feature>
<feature type="region of interest" description="Disordered" evidence="3">
    <location>
        <begin position="99"/>
        <end position="143"/>
    </location>
</feature>
<feature type="region of interest" description="Disordered" evidence="3">
    <location>
        <begin position="172"/>
        <end position="201"/>
    </location>
</feature>
<feature type="splice variant" id="VSP_062266" description="In isoform 1.">
    <original>MEAEPIPDSSMPAKLLAPPCLNLERLGGSPSQEKPRTPGCCRISE</original>
    <variation>MTEPQVGCVACPRVHKEPAQVGTPWPAKPRSHPRKRDPTALLP</variation>
    <location>
        <begin position="1"/>
        <end position="45"/>
    </location>
</feature>
<protein>
    <recommendedName>
        <fullName evidence="4">GATA-type zinc finger protein 1</fullName>
    </recommendedName>
    <alternativeName>
        <fullName evidence="1">GATA-like protein 1</fullName>
        <shortName evidence="1">GLP-1</shortName>
    </alternativeName>
</protein>
<dbReference type="EMBL" id="AK096830">
    <property type="status" value="NOT_ANNOTATED_CDS"/>
    <property type="molecule type" value="mRNA"/>
</dbReference>
<dbReference type="EMBL" id="AC011511">
    <property type="status" value="NOT_ANNOTATED_CDS"/>
    <property type="molecule type" value="Genomic_DNA"/>
</dbReference>
<dbReference type="EMBL" id="BC044225">
    <property type="status" value="NOT_ANNOTATED_CDS"/>
    <property type="molecule type" value="mRNA"/>
</dbReference>
<dbReference type="CCDS" id="CCDS45959.1">
    <molecule id="P0C6A0-1"/>
</dbReference>
<dbReference type="RefSeq" id="NP_001096637.1">
    <molecule id="P0C6A0-1"/>
    <property type="nucleotide sequence ID" value="NM_001103167.1"/>
</dbReference>
<dbReference type="RefSeq" id="NP_001395962.1">
    <molecule id="P0C6A0-2"/>
    <property type="nucleotide sequence ID" value="NM_001409033.1"/>
</dbReference>
<dbReference type="FunCoup" id="P0C6A0">
    <property type="interactions" value="245"/>
</dbReference>
<dbReference type="STRING" id="9606.ENSP00000384434"/>
<dbReference type="GlyGen" id="P0C6A0">
    <property type="glycosylation" value="1 site"/>
</dbReference>
<dbReference type="iPTMnet" id="P0C6A0"/>
<dbReference type="PhosphoSitePlus" id="P0C6A0"/>
<dbReference type="BioMuta" id="ZGLP1"/>
<dbReference type="DMDM" id="166990464"/>
<dbReference type="MassIVE" id="P0C6A0"/>
<dbReference type="PaxDb" id="9606-ENSP00000384434"/>
<dbReference type="PeptideAtlas" id="P0C6A0"/>
<dbReference type="ProteomicsDB" id="52325"/>
<dbReference type="Antibodypedia" id="42858">
    <property type="antibodies" value="97 antibodies from 20 providers"/>
</dbReference>
<dbReference type="DNASU" id="100125288"/>
<dbReference type="Ensembl" id="ENST00000707000.1">
    <molecule id="P0C6A0-2"/>
    <property type="protein sequence ID" value="ENSP00000516709.1"/>
    <property type="gene ID" value="ENSG00000220201.8"/>
</dbReference>
<dbReference type="GeneID" id="100125288"/>
<dbReference type="KEGG" id="hsa:100125288"/>
<dbReference type="MANE-Select" id="ENST00000707000.1">
    <property type="protein sequence ID" value="ENSP00000516709.1"/>
    <property type="RefSeq nucleotide sequence ID" value="NM_001409033.1"/>
    <property type="RefSeq protein sequence ID" value="NP_001395962.1"/>
</dbReference>
<dbReference type="UCSC" id="uc002mnw.5">
    <molecule id="P0C6A0-2"/>
    <property type="organism name" value="human"/>
</dbReference>
<dbReference type="AGR" id="HGNC:37245"/>
<dbReference type="CTD" id="100125288"/>
<dbReference type="DisGeNET" id="100125288"/>
<dbReference type="GeneCards" id="ZGLP1"/>
<dbReference type="HGNC" id="HGNC:37245">
    <property type="gene designation" value="ZGLP1"/>
</dbReference>
<dbReference type="HPA" id="ENSG00000220201">
    <property type="expression patterns" value="Low tissue specificity"/>
</dbReference>
<dbReference type="MIM" id="611639">
    <property type="type" value="gene"/>
</dbReference>
<dbReference type="neXtProt" id="NX_P0C6A0"/>
<dbReference type="OpenTargets" id="ENSG00000220201"/>
<dbReference type="PharmGKB" id="PA165394820"/>
<dbReference type="VEuPathDB" id="HostDB:ENSG00000220201"/>
<dbReference type="eggNOG" id="KOG1601">
    <property type="taxonomic scope" value="Eukaryota"/>
</dbReference>
<dbReference type="GeneTree" id="ENSGT00470000042444"/>
<dbReference type="InParanoid" id="P0C6A0"/>
<dbReference type="OMA" id="ALGPCWE"/>
<dbReference type="OrthoDB" id="2162994at2759"/>
<dbReference type="PAN-GO" id="P0C6A0">
    <property type="GO annotations" value="4 GO annotations based on evolutionary models"/>
</dbReference>
<dbReference type="PhylomeDB" id="P0C6A0"/>
<dbReference type="PathwayCommons" id="P0C6A0"/>
<dbReference type="SignaLink" id="P0C6A0"/>
<dbReference type="BioGRID-ORCS" id="100125288">
    <property type="hits" value="21 hits in 1177 CRISPR screens"/>
</dbReference>
<dbReference type="ChiTaRS" id="ZGLP1">
    <property type="organism name" value="human"/>
</dbReference>
<dbReference type="GenomeRNAi" id="100125288"/>
<dbReference type="Pharos" id="P0C6A0">
    <property type="development level" value="Tdark"/>
</dbReference>
<dbReference type="PRO" id="PR:P0C6A0"/>
<dbReference type="Proteomes" id="UP000005640">
    <property type="component" value="Chromosome 19"/>
</dbReference>
<dbReference type="RNAct" id="P0C6A0">
    <property type="molecule type" value="protein"/>
</dbReference>
<dbReference type="Bgee" id="ENSG00000220201">
    <property type="expression patterns" value="Expressed in primordial germ cell in gonad and 94 other cell types or tissues"/>
</dbReference>
<dbReference type="ExpressionAtlas" id="P0C6A0">
    <property type="expression patterns" value="baseline and differential"/>
</dbReference>
<dbReference type="GO" id="GO:0005654">
    <property type="term" value="C:nucleoplasm"/>
    <property type="evidence" value="ECO:0007669"/>
    <property type="project" value="UniProtKB-ARBA"/>
</dbReference>
<dbReference type="GO" id="GO:0005634">
    <property type="term" value="C:nucleus"/>
    <property type="evidence" value="ECO:0000318"/>
    <property type="project" value="GO_Central"/>
</dbReference>
<dbReference type="GO" id="GO:0000981">
    <property type="term" value="F:DNA-binding transcription factor activity, RNA polymerase II-specific"/>
    <property type="evidence" value="ECO:0000250"/>
    <property type="project" value="ARUK-UCL"/>
</dbReference>
<dbReference type="GO" id="GO:0043565">
    <property type="term" value="F:sequence-specific DNA binding"/>
    <property type="evidence" value="ECO:0007669"/>
    <property type="project" value="InterPro"/>
</dbReference>
<dbReference type="GO" id="GO:0008270">
    <property type="term" value="F:zinc ion binding"/>
    <property type="evidence" value="ECO:0007669"/>
    <property type="project" value="UniProtKB-KW"/>
</dbReference>
<dbReference type="GO" id="GO:0000122">
    <property type="term" value="P:negative regulation of transcription by RNA polymerase II"/>
    <property type="evidence" value="ECO:0000250"/>
    <property type="project" value="UniProtKB"/>
</dbReference>
<dbReference type="GO" id="GO:0048599">
    <property type="term" value="P:oocyte development"/>
    <property type="evidence" value="ECO:0000250"/>
    <property type="project" value="UniProtKB"/>
</dbReference>
<dbReference type="GO" id="GO:0045944">
    <property type="term" value="P:positive regulation of transcription by RNA polymerase II"/>
    <property type="evidence" value="ECO:0000250"/>
    <property type="project" value="UniProtKB"/>
</dbReference>
<dbReference type="GO" id="GO:0006357">
    <property type="term" value="P:regulation of transcription by RNA polymerase II"/>
    <property type="evidence" value="ECO:0000318"/>
    <property type="project" value="GO_Central"/>
</dbReference>
<dbReference type="GO" id="GO:0007283">
    <property type="term" value="P:spermatogenesis"/>
    <property type="evidence" value="ECO:0000250"/>
    <property type="project" value="UniProtKB"/>
</dbReference>
<dbReference type="CDD" id="cd00202">
    <property type="entry name" value="ZnF_GATA"/>
    <property type="match status" value="1"/>
</dbReference>
<dbReference type="FunFam" id="3.30.50.10:FF:000040">
    <property type="entry name" value="GATA-type zinc finger protein 1"/>
    <property type="match status" value="1"/>
</dbReference>
<dbReference type="Gene3D" id="3.30.50.10">
    <property type="entry name" value="Erythroid Transcription Factor GATA-1, subunit A"/>
    <property type="match status" value="1"/>
</dbReference>
<dbReference type="InterPro" id="IPR053116">
    <property type="entry name" value="GATA-type_ZnF_Regulator"/>
</dbReference>
<dbReference type="InterPro" id="IPR000679">
    <property type="entry name" value="Znf_GATA"/>
</dbReference>
<dbReference type="InterPro" id="IPR013088">
    <property type="entry name" value="Znf_NHR/GATA"/>
</dbReference>
<dbReference type="PANTHER" id="PTHR47341">
    <property type="entry name" value="GATA-TYPE ZINC FINGER PROTEIN 1"/>
    <property type="match status" value="1"/>
</dbReference>
<dbReference type="PANTHER" id="PTHR47341:SF1">
    <property type="entry name" value="GATA-TYPE ZINC FINGER PROTEIN 1"/>
    <property type="match status" value="1"/>
</dbReference>
<dbReference type="Pfam" id="PF00320">
    <property type="entry name" value="GATA"/>
    <property type="match status" value="1"/>
</dbReference>
<dbReference type="PRINTS" id="PR00619">
    <property type="entry name" value="GATAZNFINGER"/>
</dbReference>
<dbReference type="SMART" id="SM00401">
    <property type="entry name" value="ZnF_GATA"/>
    <property type="match status" value="1"/>
</dbReference>
<dbReference type="SUPFAM" id="SSF57716">
    <property type="entry name" value="Glucocorticoid receptor-like (DNA-binding domain)"/>
    <property type="match status" value="1"/>
</dbReference>
<dbReference type="PROSITE" id="PS50114">
    <property type="entry name" value="GATA_ZN_FINGER_2"/>
    <property type="match status" value="1"/>
</dbReference>
<comment type="function">
    <text evidence="1">Transcriptional regulator that plays a key role in germ cell development. Determines the oogenic fate by activating key genes for the oogenic program and meiotic prophase entry. Acts downstream of bone morphogenetic protein (BMP) by regulating expression of genes required for the oogenic programs, which are repressed by Polycomb activities in sexually uncommitted germ cells. Regulates expression of STRA8, a central downstream effector for the meiotic program. Acts independently of retinoic acid (RA). In males, not required for germ-cell sex determination, but required to allow the spermatogonia to efficiently accomplish the meiotic prophase.</text>
</comment>
<comment type="subcellular location">
    <subcellularLocation>
        <location evidence="1">Nucleus</location>
    </subcellularLocation>
</comment>
<comment type="alternative products">
    <event type="alternative splicing"/>
    <isoform>
        <id>P0C6A0-2</id>
        <name>2</name>
        <sequence type="displayed"/>
    </isoform>
    <isoform>
        <id>P0C6A0-1</id>
        <name>1</name>
        <sequence type="described" ref="VSP_062266"/>
    </isoform>
</comment>
<comment type="miscellaneous">
    <molecule>Isoform 2</molecule>
    <text evidence="4">Gene prediction based on EST data and conservation.</text>
</comment>
<organism>
    <name type="scientific">Homo sapiens</name>
    <name type="common">Human</name>
    <dbReference type="NCBI Taxonomy" id="9606"/>
    <lineage>
        <taxon>Eukaryota</taxon>
        <taxon>Metazoa</taxon>
        <taxon>Chordata</taxon>
        <taxon>Craniata</taxon>
        <taxon>Vertebrata</taxon>
        <taxon>Euteleostomi</taxon>
        <taxon>Mammalia</taxon>
        <taxon>Eutheria</taxon>
        <taxon>Euarchontoglires</taxon>
        <taxon>Primates</taxon>
        <taxon>Haplorrhini</taxon>
        <taxon>Catarrhini</taxon>
        <taxon>Hominidae</taxon>
        <taxon>Homo</taxon>
    </lineage>
</organism>
<sequence>MEAEPIPDSSMPAKLLAPPCLNLERLGGSPSQEKPRTPGCCRISERSLWPACQESVTALCFLQETVERLGQSPAQDTPVLGPCWDPMALGTQGRLLLDRDSKDTQTRISQKGRRLQPPGTPSAPPQRRPRKQLNPCRGTERVDPGFEGVTLKFQIKPDSSLQIIPTYSLPCSSRSQESPADAVGGPAAHPGGTEAHSAGSEALEPRRCASCRTQRTPLWRDAEDGTPLCNACGIRYKKYGTRCSSCWLVPRKNVQPKRLCGRCGVSLDPIQEG</sequence>